<sequence length="298" mass="31821">MYGVGVGGGGGGNYDGGGGNASSLFGGGGFMPSQATNAAEGTSGGGGGFPKSRNAQALLPLTVKQIMDASQTNDDKSNFAVNGMEVSTVRLVGRMLNKLDRVTDVSFTLDDGTGRVPVNRWENDSTDTKEMADIQNGDYVIVNGGLKGFQGKRQVVAYSVRRITNFNDVTHHFLHCVHVHLELTRPKSQVNANTATGTPNQTMPRDSMAYNQSPLTNQASTFSAPQNTGTGTNMIDLVLNVFHDPAVMNDDHGVGVDYVSRRLNLPEETVGKIIIDQVDLGHLYATIDDHHYKSTMNG</sequence>
<reference key="1">
    <citation type="journal article" date="2005" name="Nature">
        <title>The map-based sequence of the rice genome.</title>
        <authorList>
            <consortium name="International rice genome sequencing project (IRGSP)"/>
        </authorList>
    </citation>
    <scope>NUCLEOTIDE SEQUENCE [LARGE SCALE GENOMIC DNA]</scope>
    <source>
        <strain>cv. Nipponbare</strain>
    </source>
</reference>
<reference key="2">
    <citation type="journal article" date="2008" name="Nucleic Acids Res.">
        <title>The rice annotation project database (RAP-DB): 2008 update.</title>
        <authorList>
            <consortium name="The rice annotation project (RAP)"/>
        </authorList>
    </citation>
    <scope>GENOME REANNOTATION</scope>
    <source>
        <strain>cv. Nipponbare</strain>
    </source>
</reference>
<reference key="3">
    <citation type="journal article" date="2013" name="Rice">
        <title>Improvement of the Oryza sativa Nipponbare reference genome using next generation sequence and optical map data.</title>
        <authorList>
            <person name="Kawahara Y."/>
            <person name="de la Bastide M."/>
            <person name="Hamilton J.P."/>
            <person name="Kanamori H."/>
            <person name="McCombie W.R."/>
            <person name="Ouyang S."/>
            <person name="Schwartz D.C."/>
            <person name="Tanaka T."/>
            <person name="Wu J."/>
            <person name="Zhou S."/>
            <person name="Childs K.L."/>
            <person name="Davidson R.M."/>
            <person name="Lin H."/>
            <person name="Quesada-Ocampo L."/>
            <person name="Vaillancourt B."/>
            <person name="Sakai H."/>
            <person name="Lee S.S."/>
            <person name="Kim J."/>
            <person name="Numa H."/>
            <person name="Itoh T."/>
            <person name="Buell C.R."/>
            <person name="Matsumoto T."/>
        </authorList>
    </citation>
    <scope>GENOME REANNOTATION</scope>
    <source>
        <strain>cv. Nipponbare</strain>
    </source>
</reference>
<reference key="4">
    <citation type="journal article" date="2003" name="Science">
        <title>Collection, mapping, and annotation of over 28,000 cDNA clones from japonica rice.</title>
        <authorList>
            <consortium name="The rice full-length cDNA consortium"/>
        </authorList>
    </citation>
    <scope>NUCLEOTIDE SEQUENCE [LARGE SCALE MRNA]</scope>
    <source>
        <strain>cv. Nipponbare</strain>
    </source>
</reference>
<reference key="5">
    <citation type="journal article" date="2006" name="J. Biochem.">
        <title>A higher plant has three different types of RPA heterotrimeric complex.</title>
        <authorList>
            <person name="Ishibashi T."/>
            <person name="Kimura S."/>
            <person name="Sakaguchi K."/>
        </authorList>
    </citation>
    <scope>INTERACTION WITH RPA1A AND RPA3</scope>
</reference>
<gene>
    <name type="primary">RPA2B</name>
    <name type="synonym">RPA32B</name>
    <name type="ordered locus">Os02g0633400</name>
    <name type="ordered locus">LOC_Os02g42230</name>
    <name type="ORF">OJ1643_A10.19</name>
</gene>
<dbReference type="EMBL" id="AP004192">
    <property type="protein sequence ID" value="BAD25304.1"/>
    <property type="molecule type" value="Genomic_DNA"/>
</dbReference>
<dbReference type="EMBL" id="AP008208">
    <property type="protein sequence ID" value="BAF09424.1"/>
    <property type="molecule type" value="Genomic_DNA"/>
</dbReference>
<dbReference type="EMBL" id="AP014958">
    <property type="protein sequence ID" value="BAS79924.1"/>
    <property type="molecule type" value="Genomic_DNA"/>
</dbReference>
<dbReference type="EMBL" id="AK073723">
    <property type="protein sequence ID" value="BAG93608.1"/>
    <property type="molecule type" value="mRNA"/>
</dbReference>
<dbReference type="RefSeq" id="XP_015625648.1">
    <property type="nucleotide sequence ID" value="XM_015770162.1"/>
</dbReference>
<dbReference type="SMR" id="Q6H7J5"/>
<dbReference type="FunCoup" id="Q6H7J5">
    <property type="interactions" value="2691"/>
</dbReference>
<dbReference type="IntAct" id="Q6H7J5">
    <property type="interactions" value="2"/>
</dbReference>
<dbReference type="STRING" id="39947.Q6H7J5"/>
<dbReference type="PaxDb" id="39947-Q6H7J5"/>
<dbReference type="EnsemblPlants" id="Os02t0633400-01">
    <property type="protein sequence ID" value="Os02t0633400-01"/>
    <property type="gene ID" value="Os02g0633400"/>
</dbReference>
<dbReference type="Gramene" id="Os02t0633400-01">
    <property type="protein sequence ID" value="Os02t0633400-01"/>
    <property type="gene ID" value="Os02g0633400"/>
</dbReference>
<dbReference type="KEGG" id="dosa:Os02g0633400"/>
<dbReference type="eggNOG" id="KOG3108">
    <property type="taxonomic scope" value="Eukaryota"/>
</dbReference>
<dbReference type="HOGENOM" id="CLU_051033_3_1_1"/>
<dbReference type="InParanoid" id="Q6H7J5"/>
<dbReference type="OMA" id="SFGNKRY"/>
<dbReference type="OrthoDB" id="25571at2759"/>
<dbReference type="Proteomes" id="UP000000763">
    <property type="component" value="Chromosome 2"/>
</dbReference>
<dbReference type="Proteomes" id="UP000059680">
    <property type="component" value="Chromosome 2"/>
</dbReference>
<dbReference type="GO" id="GO:0000781">
    <property type="term" value="C:chromosome, telomeric region"/>
    <property type="evidence" value="ECO:0000318"/>
    <property type="project" value="GO_Central"/>
</dbReference>
<dbReference type="GO" id="GO:0005662">
    <property type="term" value="C:DNA replication factor A complex"/>
    <property type="evidence" value="ECO:0000318"/>
    <property type="project" value="GO_Central"/>
</dbReference>
<dbReference type="GO" id="GO:0035861">
    <property type="term" value="C:site of double-strand break"/>
    <property type="evidence" value="ECO:0000318"/>
    <property type="project" value="GO_Central"/>
</dbReference>
<dbReference type="GO" id="GO:0003697">
    <property type="term" value="F:single-stranded DNA binding"/>
    <property type="evidence" value="ECO:0000318"/>
    <property type="project" value="GO_Central"/>
</dbReference>
<dbReference type="GO" id="GO:0042162">
    <property type="term" value="F:telomeric DNA binding"/>
    <property type="evidence" value="ECO:0000318"/>
    <property type="project" value="GO_Central"/>
</dbReference>
<dbReference type="GO" id="GO:0006260">
    <property type="term" value="P:DNA replication"/>
    <property type="evidence" value="ECO:0000318"/>
    <property type="project" value="GO_Central"/>
</dbReference>
<dbReference type="GO" id="GO:0000724">
    <property type="term" value="P:double-strand break repair via homologous recombination"/>
    <property type="evidence" value="ECO:0000318"/>
    <property type="project" value="GO_Central"/>
</dbReference>
<dbReference type="GO" id="GO:0006289">
    <property type="term" value="P:nucleotide-excision repair"/>
    <property type="evidence" value="ECO:0000318"/>
    <property type="project" value="GO_Central"/>
</dbReference>
<dbReference type="CDD" id="cd04478">
    <property type="entry name" value="RPA2_DBD_D"/>
    <property type="match status" value="1"/>
</dbReference>
<dbReference type="FunFam" id="1.10.10.10:FF:000168">
    <property type="entry name" value="Replication protein A 32 kDa subunit"/>
    <property type="match status" value="1"/>
</dbReference>
<dbReference type="FunFam" id="2.40.50.140:FF:000184">
    <property type="entry name" value="replication protein A 32 kDa subunit A-like"/>
    <property type="match status" value="1"/>
</dbReference>
<dbReference type="Gene3D" id="2.40.50.140">
    <property type="entry name" value="Nucleic acid-binding proteins"/>
    <property type="match status" value="1"/>
</dbReference>
<dbReference type="Gene3D" id="1.10.10.10">
    <property type="entry name" value="Winged helix-like DNA-binding domain superfamily/Winged helix DNA-binding domain"/>
    <property type="match status" value="1"/>
</dbReference>
<dbReference type="InterPro" id="IPR012340">
    <property type="entry name" value="NA-bd_OB-fold"/>
</dbReference>
<dbReference type="InterPro" id="IPR004365">
    <property type="entry name" value="NA-bd_OB_tRNA"/>
</dbReference>
<dbReference type="InterPro" id="IPR040260">
    <property type="entry name" value="RFA2-like"/>
</dbReference>
<dbReference type="InterPro" id="IPR014646">
    <property type="entry name" value="Rfa2/RPA32"/>
</dbReference>
<dbReference type="InterPro" id="IPR014892">
    <property type="entry name" value="RPA_C"/>
</dbReference>
<dbReference type="InterPro" id="IPR036388">
    <property type="entry name" value="WH-like_DNA-bd_sf"/>
</dbReference>
<dbReference type="InterPro" id="IPR036390">
    <property type="entry name" value="WH_DNA-bd_sf"/>
</dbReference>
<dbReference type="PANTHER" id="PTHR13989:SF49">
    <property type="entry name" value="REPLICATION PROTEIN A 32 KDA SUBUNIT B"/>
    <property type="match status" value="1"/>
</dbReference>
<dbReference type="PANTHER" id="PTHR13989">
    <property type="entry name" value="REPLICATION PROTEIN A-RELATED"/>
    <property type="match status" value="1"/>
</dbReference>
<dbReference type="Pfam" id="PF08784">
    <property type="entry name" value="RPA_C"/>
    <property type="match status" value="1"/>
</dbReference>
<dbReference type="Pfam" id="PF01336">
    <property type="entry name" value="tRNA_anti-codon"/>
    <property type="match status" value="1"/>
</dbReference>
<dbReference type="PIRSF" id="PIRSF036949">
    <property type="entry name" value="RPA32"/>
    <property type="match status" value="1"/>
</dbReference>
<dbReference type="SUPFAM" id="SSF50249">
    <property type="entry name" value="Nucleic acid-binding proteins"/>
    <property type="match status" value="1"/>
</dbReference>
<dbReference type="SUPFAM" id="SSF46785">
    <property type="entry name" value="Winged helix' DNA-binding domain"/>
    <property type="match status" value="1"/>
</dbReference>
<feature type="chain" id="PRO_0000422624" description="Replication protein A 32 kDa subunit B">
    <location>
        <begin position="1"/>
        <end position="298"/>
    </location>
</feature>
<feature type="DNA-binding region" description="OB">
    <location>
        <begin position="89"/>
        <end position="163"/>
    </location>
</feature>
<organism>
    <name type="scientific">Oryza sativa subsp. japonica</name>
    <name type="common">Rice</name>
    <dbReference type="NCBI Taxonomy" id="39947"/>
    <lineage>
        <taxon>Eukaryota</taxon>
        <taxon>Viridiplantae</taxon>
        <taxon>Streptophyta</taxon>
        <taxon>Embryophyta</taxon>
        <taxon>Tracheophyta</taxon>
        <taxon>Spermatophyta</taxon>
        <taxon>Magnoliopsida</taxon>
        <taxon>Liliopsida</taxon>
        <taxon>Poales</taxon>
        <taxon>Poaceae</taxon>
        <taxon>BOP clade</taxon>
        <taxon>Oryzoideae</taxon>
        <taxon>Oryzeae</taxon>
        <taxon>Oryzinae</taxon>
        <taxon>Oryza</taxon>
        <taxon>Oryza sativa</taxon>
    </lineage>
</organism>
<name>RFA2B_ORYSJ</name>
<keyword id="KW-0227">DNA damage</keyword>
<keyword id="KW-0233">DNA recombination</keyword>
<keyword id="KW-0234">DNA repair</keyword>
<keyword id="KW-0235">DNA replication</keyword>
<keyword id="KW-0238">DNA-binding</keyword>
<keyword id="KW-0539">Nucleus</keyword>
<keyword id="KW-1185">Reference proteome</keyword>
<protein>
    <recommendedName>
        <fullName>Replication protein A 32 kDa subunit B</fullName>
        <shortName>OsRPA32B</shortName>
    </recommendedName>
    <alternativeName>
        <fullName>OsRPA32-2</fullName>
    </alternativeName>
    <alternativeName>
        <fullName>Replication factor A protein 2B</fullName>
    </alternativeName>
    <alternativeName>
        <fullName>Replication protein A 2B</fullName>
    </alternativeName>
</protein>
<evidence type="ECO:0000250" key="1"/>
<evidence type="ECO:0000269" key="2">
    <source>
    </source>
</evidence>
<evidence type="ECO:0000305" key="3"/>
<comment type="function">
    <text evidence="1">Component of the replication protein A complex (RPA) required for DNA recombination, repair and replication. The activity of RPA is mediated by single-stranded DNA binding and protein interactions (By similarity).</text>
</comment>
<comment type="subunit">
    <text evidence="1 2">Heterotrimer of RPA1, RPA2 and RPA3 (canonical replication protein A complex) (By similarity). Interacts with RPA1A and RPA3.</text>
</comment>
<comment type="interaction">
    <interactant intactId="EBI-849532">
        <id>Q6H7J5</id>
    </interactant>
    <interactant intactId="EBI-849583">
        <id>Q6YZ49</id>
        <label>RPA1A</label>
    </interactant>
    <organismsDiffer>false</organismsDiffer>
    <experiments>4</experiments>
</comment>
<comment type="interaction">
    <interactant intactId="EBI-849532">
        <id>Q6H7J5</id>
    </interactant>
    <interactant intactId="EBI-849521">
        <id>Q9SDK9</id>
        <label>RPA3</label>
    </interactant>
    <organismsDiffer>false</organismsDiffer>
    <experiments>2</experiments>
</comment>
<comment type="subcellular location">
    <subcellularLocation>
        <location evidence="1">Nucleus</location>
    </subcellularLocation>
</comment>
<comment type="PTM">
    <text evidence="1">Phosphorylated in a cell-cycle-dependent manner (from the S phase until mitosis). In response to DNA damage, recruited to DNA-repair nuclear foci, as a hypophosphorylated form (By similarity).</text>
</comment>
<comment type="similarity">
    <text evidence="3">Belongs to the replication factor A protein 2 family.</text>
</comment>
<proteinExistence type="evidence at protein level"/>
<accession>Q6H7J5</accession>
<accession>A0A0P0VM99</accession>